<reference key="1">
    <citation type="journal article" date="1995" name="Science">
        <title>Whole-genome random sequencing and assembly of Haemophilus influenzae Rd.</title>
        <authorList>
            <person name="Fleischmann R.D."/>
            <person name="Adams M.D."/>
            <person name="White O."/>
            <person name="Clayton R.A."/>
            <person name="Kirkness E.F."/>
            <person name="Kerlavage A.R."/>
            <person name="Bult C.J."/>
            <person name="Tomb J.-F."/>
            <person name="Dougherty B.A."/>
            <person name="Merrick J.M."/>
            <person name="McKenney K."/>
            <person name="Sutton G.G."/>
            <person name="FitzHugh W."/>
            <person name="Fields C.A."/>
            <person name="Gocayne J.D."/>
            <person name="Scott J.D."/>
            <person name="Shirley R."/>
            <person name="Liu L.-I."/>
            <person name="Glodek A."/>
            <person name="Kelley J.M."/>
            <person name="Weidman J.F."/>
            <person name="Phillips C.A."/>
            <person name="Spriggs T."/>
            <person name="Hedblom E."/>
            <person name="Cotton M.D."/>
            <person name="Utterback T.R."/>
            <person name="Hanna M.C."/>
            <person name="Nguyen D.T."/>
            <person name="Saudek D.M."/>
            <person name="Brandon R.C."/>
            <person name="Fine L.D."/>
            <person name="Fritchman J.L."/>
            <person name="Fuhrmann J.L."/>
            <person name="Geoghagen N.S.M."/>
            <person name="Gnehm C.L."/>
            <person name="McDonald L.A."/>
            <person name="Small K.V."/>
            <person name="Fraser C.M."/>
            <person name="Smith H.O."/>
            <person name="Venter J.C."/>
        </authorList>
    </citation>
    <scope>NUCLEOTIDE SEQUENCE [LARGE SCALE GENOMIC DNA]</scope>
    <source>
        <strain>ATCC 51907 / DSM 11121 / KW20 / Rd</strain>
    </source>
</reference>
<organism>
    <name type="scientific">Haemophilus influenzae (strain ATCC 51907 / DSM 11121 / KW20 / Rd)</name>
    <dbReference type="NCBI Taxonomy" id="71421"/>
    <lineage>
        <taxon>Bacteria</taxon>
        <taxon>Pseudomonadati</taxon>
        <taxon>Pseudomonadota</taxon>
        <taxon>Gammaproteobacteria</taxon>
        <taxon>Pasteurellales</taxon>
        <taxon>Pasteurellaceae</taxon>
        <taxon>Haemophilus</taxon>
    </lineage>
</organism>
<name>Y1717_HAEIN</name>
<sequence>MLGEGASKVELQQLRTEHDSLKVQIRKDQKSI</sequence>
<proteinExistence type="predicted"/>
<keyword id="KW-1185">Reference proteome</keyword>
<protein>
    <recommendedName>
        <fullName>Uncharacterized protein HI_1717</fullName>
    </recommendedName>
</protein>
<gene>
    <name type="ordered locus">HI_1717</name>
</gene>
<feature type="chain" id="PRO_0000078108" description="Uncharacterized protein HI_1717">
    <location>
        <begin position="1"/>
        <end position="32"/>
    </location>
</feature>
<dbReference type="EMBL" id="L42023">
    <property type="protein sequence ID" value="AAC23364.1"/>
    <property type="molecule type" value="Genomic_DNA"/>
</dbReference>
<dbReference type="PIR" id="H64040">
    <property type="entry name" value="H64040"/>
</dbReference>
<dbReference type="SMR" id="P44295"/>
<dbReference type="STRING" id="71421.HI_1717"/>
<dbReference type="EnsemblBacteria" id="AAC23364">
    <property type="protein sequence ID" value="AAC23364"/>
    <property type="gene ID" value="HI_1717"/>
</dbReference>
<dbReference type="KEGG" id="hin:HI_1717"/>
<dbReference type="HOGENOM" id="CLU_3389691_0_0_6"/>
<dbReference type="Proteomes" id="UP000000579">
    <property type="component" value="Chromosome"/>
</dbReference>
<accession>P44295</accession>